<evidence type="ECO:0000255" key="1">
    <source>
        <dbReference type="HAMAP-Rule" id="MF_00246"/>
    </source>
</evidence>
<reference key="1">
    <citation type="journal article" date="2007" name="Proc. Natl. Acad. Sci. U.S.A.">
        <title>Genome plasticity of BCG and impact on vaccine efficacy.</title>
        <authorList>
            <person name="Brosch R."/>
            <person name="Gordon S.V."/>
            <person name="Garnier T."/>
            <person name="Eiglmeier K."/>
            <person name="Frigui W."/>
            <person name="Valenti P."/>
            <person name="Dos Santos S."/>
            <person name="Duthoy S."/>
            <person name="Lacroix C."/>
            <person name="Garcia-Pelayo C."/>
            <person name="Inwald J.K."/>
            <person name="Golby P."/>
            <person name="Garcia J.N."/>
            <person name="Hewinson R.G."/>
            <person name="Behr M.A."/>
            <person name="Quail M.A."/>
            <person name="Churcher C."/>
            <person name="Barrell B.G."/>
            <person name="Parkhill J."/>
            <person name="Cole S.T."/>
        </authorList>
    </citation>
    <scope>NUCLEOTIDE SEQUENCE [LARGE SCALE GENOMIC DNA]</scope>
    <source>
        <strain>BCG / Pasteur 1173P2</strain>
    </source>
</reference>
<gene>
    <name evidence="1" type="primary">galK</name>
    <name type="ordered locus">BCG_0666</name>
</gene>
<dbReference type="EC" id="2.7.1.6" evidence="1"/>
<dbReference type="EMBL" id="AM408590">
    <property type="protein sequence ID" value="CAL70652.1"/>
    <property type="molecule type" value="Genomic_DNA"/>
</dbReference>
<dbReference type="RefSeq" id="WP_003403225.1">
    <property type="nucleotide sequence ID" value="NC_008769.1"/>
</dbReference>
<dbReference type="SMR" id="A1KG98"/>
<dbReference type="KEGG" id="mbb:BCG_0666"/>
<dbReference type="HOGENOM" id="CLU_017814_2_1_11"/>
<dbReference type="UniPathway" id="UPA00214"/>
<dbReference type="Proteomes" id="UP000001472">
    <property type="component" value="Chromosome"/>
</dbReference>
<dbReference type="GO" id="GO:0005829">
    <property type="term" value="C:cytosol"/>
    <property type="evidence" value="ECO:0007669"/>
    <property type="project" value="TreeGrafter"/>
</dbReference>
<dbReference type="GO" id="GO:0005524">
    <property type="term" value="F:ATP binding"/>
    <property type="evidence" value="ECO:0007669"/>
    <property type="project" value="UniProtKB-UniRule"/>
</dbReference>
<dbReference type="GO" id="GO:0004335">
    <property type="term" value="F:galactokinase activity"/>
    <property type="evidence" value="ECO:0007669"/>
    <property type="project" value="UniProtKB-UniRule"/>
</dbReference>
<dbReference type="GO" id="GO:0000287">
    <property type="term" value="F:magnesium ion binding"/>
    <property type="evidence" value="ECO:0007669"/>
    <property type="project" value="UniProtKB-UniRule"/>
</dbReference>
<dbReference type="GO" id="GO:0006012">
    <property type="term" value="P:galactose metabolic process"/>
    <property type="evidence" value="ECO:0007669"/>
    <property type="project" value="UniProtKB-UniRule"/>
</dbReference>
<dbReference type="FunFam" id="3.30.70.890:FF:000001">
    <property type="entry name" value="Galactokinase"/>
    <property type="match status" value="1"/>
</dbReference>
<dbReference type="Gene3D" id="3.30.230.10">
    <property type="match status" value="1"/>
</dbReference>
<dbReference type="Gene3D" id="3.30.70.890">
    <property type="entry name" value="GHMP kinase, C-terminal domain"/>
    <property type="match status" value="1"/>
</dbReference>
<dbReference type="HAMAP" id="MF_00246">
    <property type="entry name" value="Galactokinase"/>
    <property type="match status" value="1"/>
</dbReference>
<dbReference type="InterPro" id="IPR000705">
    <property type="entry name" value="Galactokinase"/>
</dbReference>
<dbReference type="InterPro" id="IPR022963">
    <property type="entry name" value="Galactokinase_bac"/>
</dbReference>
<dbReference type="InterPro" id="IPR019741">
    <property type="entry name" value="Galactokinase_CS"/>
</dbReference>
<dbReference type="InterPro" id="IPR019539">
    <property type="entry name" value="GalKase_N"/>
</dbReference>
<dbReference type="InterPro" id="IPR013750">
    <property type="entry name" value="GHMP_kinase_C_dom"/>
</dbReference>
<dbReference type="InterPro" id="IPR036554">
    <property type="entry name" value="GHMP_kinase_C_sf"/>
</dbReference>
<dbReference type="InterPro" id="IPR006204">
    <property type="entry name" value="GHMP_kinase_N_dom"/>
</dbReference>
<dbReference type="InterPro" id="IPR006206">
    <property type="entry name" value="Mevalonate/galactokinase"/>
</dbReference>
<dbReference type="InterPro" id="IPR020568">
    <property type="entry name" value="Ribosomal_Su5_D2-typ_SF"/>
</dbReference>
<dbReference type="InterPro" id="IPR014721">
    <property type="entry name" value="Ribsml_uS5_D2-typ_fold_subgr"/>
</dbReference>
<dbReference type="NCBIfam" id="TIGR00131">
    <property type="entry name" value="gal_kin"/>
    <property type="match status" value="1"/>
</dbReference>
<dbReference type="NCBIfam" id="NF001816">
    <property type="entry name" value="PRK00555.1"/>
    <property type="match status" value="1"/>
</dbReference>
<dbReference type="PANTHER" id="PTHR10457:SF7">
    <property type="entry name" value="GALACTOKINASE-RELATED"/>
    <property type="match status" value="1"/>
</dbReference>
<dbReference type="PANTHER" id="PTHR10457">
    <property type="entry name" value="MEVALONATE KINASE/GALACTOKINASE"/>
    <property type="match status" value="1"/>
</dbReference>
<dbReference type="Pfam" id="PF10509">
    <property type="entry name" value="GalKase_gal_bdg"/>
    <property type="match status" value="1"/>
</dbReference>
<dbReference type="Pfam" id="PF08544">
    <property type="entry name" value="GHMP_kinases_C"/>
    <property type="match status" value="1"/>
</dbReference>
<dbReference type="Pfam" id="PF00288">
    <property type="entry name" value="GHMP_kinases_N"/>
    <property type="match status" value="1"/>
</dbReference>
<dbReference type="PIRSF" id="PIRSF000530">
    <property type="entry name" value="Galactokinase"/>
    <property type="match status" value="1"/>
</dbReference>
<dbReference type="PRINTS" id="PR00473">
    <property type="entry name" value="GALCTOKINASE"/>
</dbReference>
<dbReference type="PRINTS" id="PR00959">
    <property type="entry name" value="MEVGALKINASE"/>
</dbReference>
<dbReference type="SUPFAM" id="SSF55060">
    <property type="entry name" value="GHMP Kinase, C-terminal domain"/>
    <property type="match status" value="1"/>
</dbReference>
<dbReference type="SUPFAM" id="SSF54211">
    <property type="entry name" value="Ribosomal protein S5 domain 2-like"/>
    <property type="match status" value="1"/>
</dbReference>
<dbReference type="PROSITE" id="PS00106">
    <property type="entry name" value="GALACTOKINASE"/>
    <property type="match status" value="1"/>
</dbReference>
<sequence>MTVSYGAPGRVNLIGEHTDYNLGFALPIALPRRTVVTFTPEHTGAITARSDRADGSARIPLDTTPGQVTGWAAYAAGAIWALRGAGHPVPGGAMSITSDVEIGSGLSSSAALIGAVLGAVGAATGTRIDRLERARLAQRAENDYVGAPTGLLDHLAALFGAPKTALLIDFRDITVRPVAFDPDACDVVLLLMDSRARHRHAGGEYALRRASCERAAADLGVSSLRAVQDRGLAALGAIADPIDARRARHVLTENQRVLDFAAALADSDFTAAGQLLTASHESMREDFAITTERIDLIAESAVRAGALGARMTGGGFGGAVIALVPADRARDVADTVRRAAVTAGYDEPAVSRTYAAPGAAECC</sequence>
<proteinExistence type="inferred from homology"/>
<comment type="function">
    <text evidence="1">Catalyzes the transfer of the gamma-phosphate of ATP to D-galactose to form alpha-D-galactose-1-phosphate (Gal-1-P).</text>
</comment>
<comment type="catalytic activity">
    <reaction evidence="1">
        <text>alpha-D-galactose + ATP = alpha-D-galactose 1-phosphate + ADP + H(+)</text>
        <dbReference type="Rhea" id="RHEA:13553"/>
        <dbReference type="ChEBI" id="CHEBI:15378"/>
        <dbReference type="ChEBI" id="CHEBI:28061"/>
        <dbReference type="ChEBI" id="CHEBI:30616"/>
        <dbReference type="ChEBI" id="CHEBI:58336"/>
        <dbReference type="ChEBI" id="CHEBI:456216"/>
        <dbReference type="EC" id="2.7.1.6"/>
    </reaction>
</comment>
<comment type="pathway">
    <text evidence="1">Carbohydrate metabolism; galactose metabolism.</text>
</comment>
<comment type="subcellular location">
    <subcellularLocation>
        <location evidence="1">Cytoplasm</location>
    </subcellularLocation>
</comment>
<comment type="similarity">
    <text evidence="1">Belongs to the GHMP kinase family. GalK subfamily.</text>
</comment>
<accession>A1KG98</accession>
<protein>
    <recommendedName>
        <fullName evidence="1">Galactokinase</fullName>
        <ecNumber evidence="1">2.7.1.6</ecNumber>
    </recommendedName>
    <alternativeName>
        <fullName evidence="1">Galactose kinase</fullName>
    </alternativeName>
</protein>
<organism>
    <name type="scientific">Mycobacterium bovis (strain BCG / Pasteur 1173P2)</name>
    <dbReference type="NCBI Taxonomy" id="410289"/>
    <lineage>
        <taxon>Bacteria</taxon>
        <taxon>Bacillati</taxon>
        <taxon>Actinomycetota</taxon>
        <taxon>Actinomycetes</taxon>
        <taxon>Mycobacteriales</taxon>
        <taxon>Mycobacteriaceae</taxon>
        <taxon>Mycobacterium</taxon>
        <taxon>Mycobacterium tuberculosis complex</taxon>
    </lineage>
</organism>
<keyword id="KW-0067">ATP-binding</keyword>
<keyword id="KW-0119">Carbohydrate metabolism</keyword>
<keyword id="KW-0963">Cytoplasm</keyword>
<keyword id="KW-0299">Galactose metabolism</keyword>
<keyword id="KW-0418">Kinase</keyword>
<keyword id="KW-0460">Magnesium</keyword>
<keyword id="KW-0479">Metal-binding</keyword>
<keyword id="KW-0547">Nucleotide-binding</keyword>
<keyword id="KW-0808">Transferase</keyword>
<feature type="chain" id="PRO_1000100834" description="Galactokinase">
    <location>
        <begin position="1"/>
        <end position="363"/>
    </location>
</feature>
<feature type="active site" description="Proton acceptor" evidence="1">
    <location>
        <position position="153"/>
    </location>
</feature>
<feature type="binding site" evidence="1">
    <location>
        <begin position="16"/>
        <end position="19"/>
    </location>
    <ligand>
        <name>substrate</name>
    </ligand>
</feature>
<feature type="binding site" evidence="1">
    <location>
        <position position="50"/>
    </location>
    <ligand>
        <name>ATP</name>
        <dbReference type="ChEBI" id="CHEBI:30616"/>
    </ligand>
</feature>
<feature type="binding site" evidence="1">
    <location>
        <begin position="103"/>
        <end position="109"/>
    </location>
    <ligand>
        <name>ATP</name>
        <dbReference type="ChEBI" id="CHEBI:30616"/>
    </ligand>
</feature>
<feature type="binding site" evidence="1">
    <location>
        <position position="109"/>
    </location>
    <ligand>
        <name>Mg(2+)</name>
        <dbReference type="ChEBI" id="CHEBI:18420"/>
    </ligand>
</feature>
<feature type="binding site" evidence="1">
    <location>
        <position position="141"/>
    </location>
    <ligand>
        <name>Mg(2+)</name>
        <dbReference type="ChEBI" id="CHEBI:18420"/>
    </ligand>
</feature>
<feature type="binding site" evidence="1">
    <location>
        <position position="205"/>
    </location>
    <ligand>
        <name>substrate</name>
    </ligand>
</feature>
<feature type="site" description="Transition state stabilizer" evidence="1">
    <location>
        <position position="10"/>
    </location>
</feature>
<name>GAL1_MYCBP</name>